<evidence type="ECO:0000255" key="1">
    <source>
        <dbReference type="HAMAP-Rule" id="MF_00377"/>
    </source>
</evidence>
<evidence type="ECO:0000256" key="2">
    <source>
        <dbReference type="SAM" id="MobiDB-lite"/>
    </source>
</evidence>
<organism>
    <name type="scientific">Shewanella sp. (strain MR-4)</name>
    <dbReference type="NCBI Taxonomy" id="60480"/>
    <lineage>
        <taxon>Bacteria</taxon>
        <taxon>Pseudomonadati</taxon>
        <taxon>Pseudomonadota</taxon>
        <taxon>Gammaproteobacteria</taxon>
        <taxon>Alteromonadales</taxon>
        <taxon>Shewanellaceae</taxon>
        <taxon>Shewanella</taxon>
    </lineage>
</organism>
<name>DNAA_SHESM</name>
<feature type="chain" id="PRO_1000048723" description="Chromosomal replication initiator protein DnaA">
    <location>
        <begin position="1"/>
        <end position="460"/>
    </location>
</feature>
<feature type="region of interest" description="Domain I, interacts with DnaA modulators" evidence="1">
    <location>
        <begin position="1"/>
        <end position="84"/>
    </location>
</feature>
<feature type="region of interest" description="Domain II" evidence="1">
    <location>
        <begin position="84"/>
        <end position="123"/>
    </location>
</feature>
<feature type="region of interest" description="Disordered" evidence="2">
    <location>
        <begin position="103"/>
        <end position="123"/>
    </location>
</feature>
<feature type="region of interest" description="Domain III, AAA+ region" evidence="1">
    <location>
        <begin position="124"/>
        <end position="340"/>
    </location>
</feature>
<feature type="region of interest" description="Domain IV, binds dsDNA" evidence="1">
    <location>
        <begin position="341"/>
        <end position="460"/>
    </location>
</feature>
<feature type="binding site" evidence="1">
    <location>
        <position position="168"/>
    </location>
    <ligand>
        <name>ATP</name>
        <dbReference type="ChEBI" id="CHEBI:30616"/>
    </ligand>
</feature>
<feature type="binding site" evidence="1">
    <location>
        <position position="170"/>
    </location>
    <ligand>
        <name>ATP</name>
        <dbReference type="ChEBI" id="CHEBI:30616"/>
    </ligand>
</feature>
<feature type="binding site" evidence="1">
    <location>
        <position position="171"/>
    </location>
    <ligand>
        <name>ATP</name>
        <dbReference type="ChEBI" id="CHEBI:30616"/>
    </ligand>
</feature>
<feature type="binding site" evidence="1">
    <location>
        <position position="172"/>
    </location>
    <ligand>
        <name>ATP</name>
        <dbReference type="ChEBI" id="CHEBI:30616"/>
    </ligand>
</feature>
<keyword id="KW-0067">ATP-binding</keyword>
<keyword id="KW-0963">Cytoplasm</keyword>
<keyword id="KW-0235">DNA replication</keyword>
<keyword id="KW-0238">DNA-binding</keyword>
<keyword id="KW-0446">Lipid-binding</keyword>
<keyword id="KW-0547">Nucleotide-binding</keyword>
<proteinExistence type="inferred from homology"/>
<dbReference type="EMBL" id="CP000446">
    <property type="protein sequence ID" value="ABI37083.1"/>
    <property type="molecule type" value="Genomic_DNA"/>
</dbReference>
<dbReference type="RefSeq" id="WP_011620838.1">
    <property type="nucleotide sequence ID" value="NC_008321.1"/>
</dbReference>
<dbReference type="SMR" id="Q0HPD4"/>
<dbReference type="KEGG" id="she:Shewmr4_0001"/>
<dbReference type="HOGENOM" id="CLU_026910_0_1_6"/>
<dbReference type="GO" id="GO:0005737">
    <property type="term" value="C:cytoplasm"/>
    <property type="evidence" value="ECO:0007669"/>
    <property type="project" value="UniProtKB-SubCell"/>
</dbReference>
<dbReference type="GO" id="GO:0005886">
    <property type="term" value="C:plasma membrane"/>
    <property type="evidence" value="ECO:0007669"/>
    <property type="project" value="TreeGrafter"/>
</dbReference>
<dbReference type="GO" id="GO:0005524">
    <property type="term" value="F:ATP binding"/>
    <property type="evidence" value="ECO:0007669"/>
    <property type="project" value="UniProtKB-UniRule"/>
</dbReference>
<dbReference type="GO" id="GO:0016887">
    <property type="term" value="F:ATP hydrolysis activity"/>
    <property type="evidence" value="ECO:0007669"/>
    <property type="project" value="InterPro"/>
</dbReference>
<dbReference type="GO" id="GO:0003688">
    <property type="term" value="F:DNA replication origin binding"/>
    <property type="evidence" value="ECO:0007669"/>
    <property type="project" value="UniProtKB-UniRule"/>
</dbReference>
<dbReference type="GO" id="GO:0008289">
    <property type="term" value="F:lipid binding"/>
    <property type="evidence" value="ECO:0007669"/>
    <property type="project" value="UniProtKB-KW"/>
</dbReference>
<dbReference type="GO" id="GO:0006270">
    <property type="term" value="P:DNA replication initiation"/>
    <property type="evidence" value="ECO:0007669"/>
    <property type="project" value="UniProtKB-UniRule"/>
</dbReference>
<dbReference type="GO" id="GO:0006275">
    <property type="term" value="P:regulation of DNA replication"/>
    <property type="evidence" value="ECO:0007669"/>
    <property type="project" value="UniProtKB-UniRule"/>
</dbReference>
<dbReference type="CDD" id="cd00009">
    <property type="entry name" value="AAA"/>
    <property type="match status" value="1"/>
</dbReference>
<dbReference type="CDD" id="cd06571">
    <property type="entry name" value="Bac_DnaA_C"/>
    <property type="match status" value="1"/>
</dbReference>
<dbReference type="FunFam" id="1.10.1750.10:FF:000001">
    <property type="entry name" value="Chromosomal replication initiator protein DnaA"/>
    <property type="match status" value="1"/>
</dbReference>
<dbReference type="FunFam" id="1.10.8.60:FF:000003">
    <property type="entry name" value="Chromosomal replication initiator protein DnaA"/>
    <property type="match status" value="1"/>
</dbReference>
<dbReference type="FunFam" id="3.30.300.180:FF:000001">
    <property type="entry name" value="Chromosomal replication initiator protein DnaA"/>
    <property type="match status" value="1"/>
</dbReference>
<dbReference type="FunFam" id="3.40.50.300:FF:000103">
    <property type="entry name" value="Chromosomal replication initiator protein DnaA"/>
    <property type="match status" value="1"/>
</dbReference>
<dbReference type="Gene3D" id="1.10.1750.10">
    <property type="match status" value="1"/>
</dbReference>
<dbReference type="Gene3D" id="1.10.8.60">
    <property type="match status" value="1"/>
</dbReference>
<dbReference type="Gene3D" id="3.30.300.180">
    <property type="match status" value="1"/>
</dbReference>
<dbReference type="Gene3D" id="3.40.50.300">
    <property type="entry name" value="P-loop containing nucleotide triphosphate hydrolases"/>
    <property type="match status" value="1"/>
</dbReference>
<dbReference type="HAMAP" id="MF_00377">
    <property type="entry name" value="DnaA_bact"/>
    <property type="match status" value="1"/>
</dbReference>
<dbReference type="InterPro" id="IPR003593">
    <property type="entry name" value="AAA+_ATPase"/>
</dbReference>
<dbReference type="InterPro" id="IPR001957">
    <property type="entry name" value="Chromosome_initiator_DnaA"/>
</dbReference>
<dbReference type="InterPro" id="IPR020591">
    <property type="entry name" value="Chromosome_initiator_DnaA-like"/>
</dbReference>
<dbReference type="InterPro" id="IPR018312">
    <property type="entry name" value="Chromosome_initiator_DnaA_CS"/>
</dbReference>
<dbReference type="InterPro" id="IPR013159">
    <property type="entry name" value="DnaA_C"/>
</dbReference>
<dbReference type="InterPro" id="IPR013317">
    <property type="entry name" value="DnaA_dom"/>
</dbReference>
<dbReference type="InterPro" id="IPR024633">
    <property type="entry name" value="DnaA_N_dom"/>
</dbReference>
<dbReference type="InterPro" id="IPR038454">
    <property type="entry name" value="DnaA_N_sf"/>
</dbReference>
<dbReference type="InterPro" id="IPR055199">
    <property type="entry name" value="Hda_lid"/>
</dbReference>
<dbReference type="InterPro" id="IPR027417">
    <property type="entry name" value="P-loop_NTPase"/>
</dbReference>
<dbReference type="InterPro" id="IPR010921">
    <property type="entry name" value="Trp_repressor/repl_initiator"/>
</dbReference>
<dbReference type="NCBIfam" id="TIGR00362">
    <property type="entry name" value="DnaA"/>
    <property type="match status" value="1"/>
</dbReference>
<dbReference type="PANTHER" id="PTHR30050">
    <property type="entry name" value="CHROMOSOMAL REPLICATION INITIATOR PROTEIN DNAA"/>
    <property type="match status" value="1"/>
</dbReference>
<dbReference type="PANTHER" id="PTHR30050:SF2">
    <property type="entry name" value="CHROMOSOMAL REPLICATION INITIATOR PROTEIN DNAA"/>
    <property type="match status" value="1"/>
</dbReference>
<dbReference type="Pfam" id="PF00308">
    <property type="entry name" value="Bac_DnaA"/>
    <property type="match status" value="1"/>
</dbReference>
<dbReference type="Pfam" id="PF08299">
    <property type="entry name" value="Bac_DnaA_C"/>
    <property type="match status" value="1"/>
</dbReference>
<dbReference type="Pfam" id="PF11638">
    <property type="entry name" value="DnaA_N"/>
    <property type="match status" value="1"/>
</dbReference>
<dbReference type="Pfam" id="PF22688">
    <property type="entry name" value="Hda_lid"/>
    <property type="match status" value="1"/>
</dbReference>
<dbReference type="PRINTS" id="PR00051">
    <property type="entry name" value="DNAA"/>
</dbReference>
<dbReference type="SMART" id="SM00382">
    <property type="entry name" value="AAA"/>
    <property type="match status" value="1"/>
</dbReference>
<dbReference type="SMART" id="SM00760">
    <property type="entry name" value="Bac_DnaA_C"/>
    <property type="match status" value="1"/>
</dbReference>
<dbReference type="SUPFAM" id="SSF52540">
    <property type="entry name" value="P-loop containing nucleoside triphosphate hydrolases"/>
    <property type="match status" value="1"/>
</dbReference>
<dbReference type="SUPFAM" id="SSF48295">
    <property type="entry name" value="TrpR-like"/>
    <property type="match status" value="1"/>
</dbReference>
<dbReference type="PROSITE" id="PS01008">
    <property type="entry name" value="DNAA"/>
    <property type="match status" value="1"/>
</dbReference>
<gene>
    <name evidence="1" type="primary">dnaA</name>
    <name type="ordered locus">Shewmr4_0001</name>
</gene>
<sequence>MAVSLWQQCIGRLQDELSAQQFSMWIRPLQAEMDGDTLVLYAPNRFVLDWVRDKYINIINQFFTEQMGNDAPKLRFDIGSRPSAKKPEPAPVAAVRVPNPQTKASVGTSFNTTEPVANTNHRSNINPTYQFDNFVEGKSNQLGKAAALQVAENPGGAYNPLFLYGGTGLGKTHLLHAVGNGIIKNNPNAKVVYMHSERFVQDMVKALQNNAIEEFKRYYRSVDALFIDDIQFFANKDRSQEEFFHTFNALLEGNHQIILTSDRYPKEIDGVEDRLKSRFGWGLTVAIEPPELETRVAILMRKAQESGINLPDEVAFFIAKRLRSNVRELEGALNRVIANANFTGRPITIDFVREALRDLLALQEKLVTIDNIQKTVAEYYKIKMADMLSKRRSRSVARPRQVAMALSKELTNQSLPEIGDAFGGRDHTTVLHACRKIAQLREESHDIKEDYANLIRTLSS</sequence>
<reference key="1">
    <citation type="submission" date="2006-08" db="EMBL/GenBank/DDBJ databases">
        <title>Complete sequence of Shewanella sp. MR-4.</title>
        <authorList>
            <consortium name="US DOE Joint Genome Institute"/>
            <person name="Copeland A."/>
            <person name="Lucas S."/>
            <person name="Lapidus A."/>
            <person name="Barry K."/>
            <person name="Detter J.C."/>
            <person name="Glavina del Rio T."/>
            <person name="Hammon N."/>
            <person name="Israni S."/>
            <person name="Dalin E."/>
            <person name="Tice H."/>
            <person name="Pitluck S."/>
            <person name="Kiss H."/>
            <person name="Brettin T."/>
            <person name="Bruce D."/>
            <person name="Han C."/>
            <person name="Tapia R."/>
            <person name="Gilna P."/>
            <person name="Schmutz J."/>
            <person name="Larimer F."/>
            <person name="Land M."/>
            <person name="Hauser L."/>
            <person name="Kyrpides N."/>
            <person name="Mikhailova N."/>
            <person name="Nealson K."/>
            <person name="Konstantinidis K."/>
            <person name="Klappenbach J."/>
            <person name="Tiedje J."/>
            <person name="Richardson P."/>
        </authorList>
    </citation>
    <scope>NUCLEOTIDE SEQUENCE [LARGE SCALE GENOMIC DNA]</scope>
    <source>
        <strain>MR-4</strain>
    </source>
</reference>
<accession>Q0HPD4</accession>
<protein>
    <recommendedName>
        <fullName evidence="1">Chromosomal replication initiator protein DnaA</fullName>
    </recommendedName>
</protein>
<comment type="function">
    <text evidence="1">Plays an essential role in the initiation and regulation of chromosomal replication. ATP-DnaA binds to the origin of replication (oriC) to initiate formation of the DNA replication initiation complex once per cell cycle. Binds the DnaA box (a 9 base pair repeat at the origin) and separates the double-stranded (ds)DNA. Forms a right-handed helical filament on oriC DNA; dsDNA binds to the exterior of the filament while single-stranded (ss)DNA is stabiized in the filament's interior. The ATP-DnaA-oriC complex binds and stabilizes one strand of the AT-rich DNA unwinding element (DUE), permitting loading of DNA polymerase. After initiation quickly degrades to an ADP-DnaA complex that is not apt for DNA replication. Binds acidic phospholipids.</text>
</comment>
<comment type="subunit">
    <text evidence="1">Oligomerizes as a right-handed, spiral filament on DNA at oriC.</text>
</comment>
<comment type="subcellular location">
    <subcellularLocation>
        <location evidence="1">Cytoplasm</location>
    </subcellularLocation>
</comment>
<comment type="domain">
    <text evidence="1">Domain I is involved in oligomerization and binding regulators, domain II is flexibile and of varying length in different bacteria, domain III forms the AAA+ region, while domain IV binds dsDNA.</text>
</comment>
<comment type="similarity">
    <text evidence="1">Belongs to the DnaA family.</text>
</comment>